<protein>
    <recommendedName>
        <fullName evidence="1">5'-methylthioadenosine/S-adenosylhomocysteine nucleosidase</fullName>
        <shortName evidence="1">MTA/SAH nucleosidase</shortName>
        <shortName evidence="1">MTAN</shortName>
        <ecNumber evidence="1">3.2.2.9</ecNumber>
    </recommendedName>
    <alternativeName>
        <fullName evidence="1">5'-deoxyadenosine nucleosidase</fullName>
        <shortName evidence="1">DOA nucleosidase</shortName>
        <shortName evidence="1">dAdo nucleosidase</shortName>
    </alternativeName>
    <alternativeName>
        <fullName evidence="1">5'-methylthioadenosine nucleosidase</fullName>
        <shortName evidence="1">MTA nucleosidase</shortName>
    </alternativeName>
    <alternativeName>
        <fullName evidence="1">S-adenosylhomocysteine nucleosidase</fullName>
        <shortName evidence="1">AdoHcy nucleosidase</shortName>
        <shortName evidence="1">SAH nucleosidase</shortName>
        <shortName evidence="1">SRH nucleosidase</shortName>
    </alternativeName>
</protein>
<comment type="function">
    <text evidence="1">Catalyzes the irreversible cleavage of the glycosidic bond in both 5'-methylthioadenosine (MTA) and S-adenosylhomocysteine (SAH/AdoHcy) to adenine and the corresponding thioribose, 5'-methylthioribose and S-ribosylhomocysteine, respectively. Also cleaves 5'-deoxyadenosine, a toxic by-product of radical S-adenosylmethionine (SAM) enzymes, into 5-deoxyribose and adenine. Thus, is required for in vivo function of the radical SAM enzymes biotin synthase and lipoic acid synthase, that are inhibited by 5'-deoxyadenosine accumulation.</text>
</comment>
<comment type="catalytic activity">
    <reaction evidence="1">
        <text>S-adenosyl-L-homocysteine + H2O = S-(5-deoxy-D-ribos-5-yl)-L-homocysteine + adenine</text>
        <dbReference type="Rhea" id="RHEA:17805"/>
        <dbReference type="ChEBI" id="CHEBI:15377"/>
        <dbReference type="ChEBI" id="CHEBI:16708"/>
        <dbReference type="ChEBI" id="CHEBI:57856"/>
        <dbReference type="ChEBI" id="CHEBI:58195"/>
        <dbReference type="EC" id="3.2.2.9"/>
    </reaction>
</comment>
<comment type="catalytic activity">
    <reaction evidence="1">
        <text>S-methyl-5'-thioadenosine + H2O = 5-(methylsulfanyl)-D-ribose + adenine</text>
        <dbReference type="Rhea" id="RHEA:13617"/>
        <dbReference type="ChEBI" id="CHEBI:15377"/>
        <dbReference type="ChEBI" id="CHEBI:16708"/>
        <dbReference type="ChEBI" id="CHEBI:17509"/>
        <dbReference type="ChEBI" id="CHEBI:78440"/>
        <dbReference type="EC" id="3.2.2.9"/>
    </reaction>
</comment>
<comment type="catalytic activity">
    <reaction evidence="1">
        <text>5'-deoxyadenosine + H2O = 5-deoxy-D-ribose + adenine</text>
        <dbReference type="Rhea" id="RHEA:29859"/>
        <dbReference type="ChEBI" id="CHEBI:15377"/>
        <dbReference type="ChEBI" id="CHEBI:16708"/>
        <dbReference type="ChEBI" id="CHEBI:17319"/>
        <dbReference type="ChEBI" id="CHEBI:149540"/>
        <dbReference type="EC" id="3.2.2.9"/>
    </reaction>
    <physiologicalReaction direction="left-to-right" evidence="1">
        <dbReference type="Rhea" id="RHEA:29860"/>
    </physiologicalReaction>
</comment>
<comment type="pathway">
    <text evidence="1">Amino-acid biosynthesis; L-methionine biosynthesis via salvage pathway; S-methyl-5-thio-alpha-D-ribose 1-phosphate from S-methyl-5'-thioadenosine (hydrolase route): step 1/2.</text>
</comment>
<comment type="subunit">
    <text evidence="1">Homodimer.</text>
</comment>
<comment type="similarity">
    <text evidence="1">Belongs to the PNP/UDP phosphorylase family. MtnN subfamily.</text>
</comment>
<reference key="1">
    <citation type="journal article" date="2008" name="Genome Res.">
        <title>Comparative genome analysis of Salmonella enteritidis PT4 and Salmonella gallinarum 287/91 provides insights into evolutionary and host adaptation pathways.</title>
        <authorList>
            <person name="Thomson N.R."/>
            <person name="Clayton D.J."/>
            <person name="Windhorst D."/>
            <person name="Vernikos G."/>
            <person name="Davidson S."/>
            <person name="Churcher C."/>
            <person name="Quail M.A."/>
            <person name="Stevens M."/>
            <person name="Jones M.A."/>
            <person name="Watson M."/>
            <person name="Barron A."/>
            <person name="Layton A."/>
            <person name="Pickard D."/>
            <person name="Kingsley R.A."/>
            <person name="Bignell A."/>
            <person name="Clark L."/>
            <person name="Harris B."/>
            <person name="Ormond D."/>
            <person name="Abdellah Z."/>
            <person name="Brooks K."/>
            <person name="Cherevach I."/>
            <person name="Chillingworth T."/>
            <person name="Woodward J."/>
            <person name="Norberczak H."/>
            <person name="Lord A."/>
            <person name="Arrowsmith C."/>
            <person name="Jagels K."/>
            <person name="Moule S."/>
            <person name="Mungall K."/>
            <person name="Saunders M."/>
            <person name="Whitehead S."/>
            <person name="Chabalgoity J.A."/>
            <person name="Maskell D."/>
            <person name="Humphreys T."/>
            <person name="Roberts M."/>
            <person name="Barrow P.A."/>
            <person name="Dougan G."/>
            <person name="Parkhill J."/>
        </authorList>
    </citation>
    <scope>NUCLEOTIDE SEQUENCE [LARGE SCALE GENOMIC DNA]</scope>
    <source>
        <strain>P125109</strain>
    </source>
</reference>
<keyword id="KW-0028">Amino-acid biosynthesis</keyword>
<keyword id="KW-0378">Hydrolase</keyword>
<keyword id="KW-0486">Methionine biosynthesis</keyword>
<sequence length="232" mass="24445">MKIGIIGAMEEEVTLLRDKIDNRQTITLGGCEIYTGQLNGTEVALLKSGIGKVAAALGATLLLEHCKPDVIINTGSAGGLASTLKVGDIVVSDEARYHDADVTAFGYEYGQLPGCPAGFKADDKLIAAAESCIRELNLNAVRGLIVSGDAFINGSVGLAKIRHNFPDAVAVEMEATAIAHVCYNFSVPFVVVRAISDVADQQSHLSFDEFLAVAAKQSTLMVETLVQKLAHG</sequence>
<gene>
    <name evidence="1" type="primary">mtnN</name>
    <name type="ordered locus">SEN0212</name>
</gene>
<feature type="chain" id="PRO_0000359330" description="5'-methylthioadenosine/S-adenosylhomocysteine nucleosidase">
    <location>
        <begin position="1"/>
        <end position="232"/>
    </location>
</feature>
<feature type="active site" description="Proton acceptor" evidence="1">
    <location>
        <position position="12"/>
    </location>
</feature>
<feature type="active site" description="Proton donor" evidence="1">
    <location>
        <position position="197"/>
    </location>
</feature>
<feature type="binding site" evidence="1">
    <location>
        <position position="78"/>
    </location>
    <ligand>
        <name>substrate</name>
    </ligand>
</feature>
<feature type="binding site" evidence="1">
    <location>
        <position position="152"/>
    </location>
    <ligand>
        <name>substrate</name>
    </ligand>
</feature>
<feature type="binding site" evidence="1">
    <location>
        <begin position="173"/>
        <end position="174"/>
    </location>
    <ligand>
        <name>substrate</name>
    </ligand>
</feature>
<evidence type="ECO:0000255" key="1">
    <source>
        <dbReference type="HAMAP-Rule" id="MF_01684"/>
    </source>
</evidence>
<dbReference type="EC" id="3.2.2.9" evidence="1"/>
<dbReference type="EMBL" id="AM933172">
    <property type="protein sequence ID" value="CAR31800.1"/>
    <property type="molecule type" value="Genomic_DNA"/>
</dbReference>
<dbReference type="RefSeq" id="WP_000689824.1">
    <property type="nucleotide sequence ID" value="NC_011294.1"/>
</dbReference>
<dbReference type="SMR" id="B5R3H1"/>
<dbReference type="KEGG" id="set:SEN0212"/>
<dbReference type="HOGENOM" id="CLU_031248_2_2_6"/>
<dbReference type="UniPathway" id="UPA00904">
    <property type="reaction ID" value="UER00871"/>
</dbReference>
<dbReference type="Proteomes" id="UP000000613">
    <property type="component" value="Chromosome"/>
</dbReference>
<dbReference type="GO" id="GO:0005829">
    <property type="term" value="C:cytosol"/>
    <property type="evidence" value="ECO:0007669"/>
    <property type="project" value="TreeGrafter"/>
</dbReference>
<dbReference type="GO" id="GO:0008782">
    <property type="term" value="F:adenosylhomocysteine nucleosidase activity"/>
    <property type="evidence" value="ECO:0007669"/>
    <property type="project" value="UniProtKB-UniRule"/>
</dbReference>
<dbReference type="GO" id="GO:0008930">
    <property type="term" value="F:methylthioadenosine nucleosidase activity"/>
    <property type="evidence" value="ECO:0007669"/>
    <property type="project" value="UniProtKB-UniRule"/>
</dbReference>
<dbReference type="GO" id="GO:0019509">
    <property type="term" value="P:L-methionine salvage from methylthioadenosine"/>
    <property type="evidence" value="ECO:0007669"/>
    <property type="project" value="UniProtKB-UniRule"/>
</dbReference>
<dbReference type="GO" id="GO:0019284">
    <property type="term" value="P:L-methionine salvage from S-adenosylmethionine"/>
    <property type="evidence" value="ECO:0007669"/>
    <property type="project" value="TreeGrafter"/>
</dbReference>
<dbReference type="GO" id="GO:0046124">
    <property type="term" value="P:purine deoxyribonucleoside catabolic process"/>
    <property type="evidence" value="ECO:0007669"/>
    <property type="project" value="UniProtKB-UniRule"/>
</dbReference>
<dbReference type="CDD" id="cd09008">
    <property type="entry name" value="MTAN"/>
    <property type="match status" value="1"/>
</dbReference>
<dbReference type="FunFam" id="3.40.50.1580:FF:000001">
    <property type="entry name" value="MTA/SAH nucleosidase family protein"/>
    <property type="match status" value="1"/>
</dbReference>
<dbReference type="Gene3D" id="3.40.50.1580">
    <property type="entry name" value="Nucleoside phosphorylase domain"/>
    <property type="match status" value="1"/>
</dbReference>
<dbReference type="HAMAP" id="MF_01684">
    <property type="entry name" value="Salvage_MtnN"/>
    <property type="match status" value="1"/>
</dbReference>
<dbReference type="InterPro" id="IPR010049">
    <property type="entry name" value="MTA_SAH_Nsdase"/>
</dbReference>
<dbReference type="InterPro" id="IPR000845">
    <property type="entry name" value="Nucleoside_phosphorylase_d"/>
</dbReference>
<dbReference type="InterPro" id="IPR035994">
    <property type="entry name" value="Nucleoside_phosphorylase_sf"/>
</dbReference>
<dbReference type="NCBIfam" id="TIGR01704">
    <property type="entry name" value="MTA_SAH-Nsdase"/>
    <property type="match status" value="1"/>
</dbReference>
<dbReference type="NCBIfam" id="NF004079">
    <property type="entry name" value="PRK05584.1"/>
    <property type="match status" value="1"/>
</dbReference>
<dbReference type="PANTHER" id="PTHR46832">
    <property type="entry name" value="5'-METHYLTHIOADENOSINE/S-ADENOSYLHOMOCYSTEINE NUCLEOSIDASE"/>
    <property type="match status" value="1"/>
</dbReference>
<dbReference type="PANTHER" id="PTHR46832:SF1">
    <property type="entry name" value="5'-METHYLTHIOADENOSINE_S-ADENOSYLHOMOCYSTEINE NUCLEOSIDASE"/>
    <property type="match status" value="1"/>
</dbReference>
<dbReference type="Pfam" id="PF01048">
    <property type="entry name" value="PNP_UDP_1"/>
    <property type="match status" value="1"/>
</dbReference>
<dbReference type="SUPFAM" id="SSF53167">
    <property type="entry name" value="Purine and uridine phosphorylases"/>
    <property type="match status" value="1"/>
</dbReference>
<organism>
    <name type="scientific">Salmonella enteritidis PT4 (strain P125109)</name>
    <dbReference type="NCBI Taxonomy" id="550537"/>
    <lineage>
        <taxon>Bacteria</taxon>
        <taxon>Pseudomonadati</taxon>
        <taxon>Pseudomonadota</taxon>
        <taxon>Gammaproteobacteria</taxon>
        <taxon>Enterobacterales</taxon>
        <taxon>Enterobacteriaceae</taxon>
        <taxon>Salmonella</taxon>
    </lineage>
</organism>
<accession>B5R3H1</accession>
<name>MTNN_SALEP</name>
<proteinExistence type="inferred from homology"/>